<organism>
    <name type="scientific">Salmonella paratyphi A (strain AKU_12601)</name>
    <dbReference type="NCBI Taxonomy" id="554290"/>
    <lineage>
        <taxon>Bacteria</taxon>
        <taxon>Pseudomonadati</taxon>
        <taxon>Pseudomonadota</taxon>
        <taxon>Gammaproteobacteria</taxon>
        <taxon>Enterobacterales</taxon>
        <taxon>Enterobacteriaceae</taxon>
        <taxon>Salmonella</taxon>
    </lineage>
</organism>
<name>LIPA_SALPK</name>
<feature type="chain" id="PRO_1000099633" description="Lipoyl synthase">
    <location>
        <begin position="1"/>
        <end position="321"/>
    </location>
</feature>
<feature type="domain" description="Radical SAM core" evidence="2">
    <location>
        <begin position="80"/>
        <end position="297"/>
    </location>
</feature>
<feature type="binding site" evidence="1">
    <location>
        <position position="68"/>
    </location>
    <ligand>
        <name>[4Fe-4S] cluster</name>
        <dbReference type="ChEBI" id="CHEBI:49883"/>
        <label>1</label>
    </ligand>
</feature>
<feature type="binding site" evidence="1">
    <location>
        <position position="73"/>
    </location>
    <ligand>
        <name>[4Fe-4S] cluster</name>
        <dbReference type="ChEBI" id="CHEBI:49883"/>
        <label>1</label>
    </ligand>
</feature>
<feature type="binding site" evidence="1">
    <location>
        <position position="79"/>
    </location>
    <ligand>
        <name>[4Fe-4S] cluster</name>
        <dbReference type="ChEBI" id="CHEBI:49883"/>
        <label>1</label>
    </ligand>
</feature>
<feature type="binding site" evidence="1">
    <location>
        <position position="94"/>
    </location>
    <ligand>
        <name>[4Fe-4S] cluster</name>
        <dbReference type="ChEBI" id="CHEBI:49883"/>
        <label>2</label>
        <note>4Fe-4S-S-AdoMet</note>
    </ligand>
</feature>
<feature type="binding site" evidence="1">
    <location>
        <position position="98"/>
    </location>
    <ligand>
        <name>[4Fe-4S] cluster</name>
        <dbReference type="ChEBI" id="CHEBI:49883"/>
        <label>2</label>
        <note>4Fe-4S-S-AdoMet</note>
    </ligand>
</feature>
<feature type="binding site" evidence="1">
    <location>
        <position position="101"/>
    </location>
    <ligand>
        <name>[4Fe-4S] cluster</name>
        <dbReference type="ChEBI" id="CHEBI:49883"/>
        <label>2</label>
        <note>4Fe-4S-S-AdoMet</note>
    </ligand>
</feature>
<feature type="binding site" evidence="1">
    <location>
        <position position="308"/>
    </location>
    <ligand>
        <name>[4Fe-4S] cluster</name>
        <dbReference type="ChEBI" id="CHEBI:49883"/>
        <label>1</label>
    </ligand>
</feature>
<accession>B5BCG1</accession>
<gene>
    <name evidence="1" type="primary">lipA</name>
    <name type="ordered locus">SSPA1953</name>
</gene>
<evidence type="ECO:0000255" key="1">
    <source>
        <dbReference type="HAMAP-Rule" id="MF_00206"/>
    </source>
</evidence>
<evidence type="ECO:0000255" key="2">
    <source>
        <dbReference type="PROSITE-ProRule" id="PRU01266"/>
    </source>
</evidence>
<dbReference type="EC" id="2.8.1.8" evidence="1"/>
<dbReference type="EMBL" id="FM200053">
    <property type="protein sequence ID" value="CAR60154.1"/>
    <property type="molecule type" value="Genomic_DNA"/>
</dbReference>
<dbReference type="RefSeq" id="WP_000042640.1">
    <property type="nucleotide sequence ID" value="NC_011147.1"/>
</dbReference>
<dbReference type="SMR" id="B5BCG1"/>
<dbReference type="KEGG" id="sek:SSPA1953"/>
<dbReference type="HOGENOM" id="CLU_033144_2_1_6"/>
<dbReference type="UniPathway" id="UPA00538">
    <property type="reaction ID" value="UER00593"/>
</dbReference>
<dbReference type="Proteomes" id="UP000001869">
    <property type="component" value="Chromosome"/>
</dbReference>
<dbReference type="GO" id="GO:0005737">
    <property type="term" value="C:cytoplasm"/>
    <property type="evidence" value="ECO:0007669"/>
    <property type="project" value="UniProtKB-SubCell"/>
</dbReference>
<dbReference type="GO" id="GO:0051539">
    <property type="term" value="F:4 iron, 4 sulfur cluster binding"/>
    <property type="evidence" value="ECO:0007669"/>
    <property type="project" value="UniProtKB-UniRule"/>
</dbReference>
<dbReference type="GO" id="GO:0016992">
    <property type="term" value="F:lipoate synthase activity"/>
    <property type="evidence" value="ECO:0007669"/>
    <property type="project" value="UniProtKB-UniRule"/>
</dbReference>
<dbReference type="GO" id="GO:0046872">
    <property type="term" value="F:metal ion binding"/>
    <property type="evidence" value="ECO:0007669"/>
    <property type="project" value="UniProtKB-KW"/>
</dbReference>
<dbReference type="CDD" id="cd01335">
    <property type="entry name" value="Radical_SAM"/>
    <property type="match status" value="1"/>
</dbReference>
<dbReference type="FunFam" id="3.20.20.70:FF:000023">
    <property type="entry name" value="Lipoyl synthase"/>
    <property type="match status" value="1"/>
</dbReference>
<dbReference type="Gene3D" id="3.20.20.70">
    <property type="entry name" value="Aldolase class I"/>
    <property type="match status" value="1"/>
</dbReference>
<dbReference type="HAMAP" id="MF_00206">
    <property type="entry name" value="Lipoyl_synth"/>
    <property type="match status" value="1"/>
</dbReference>
<dbReference type="InterPro" id="IPR013785">
    <property type="entry name" value="Aldolase_TIM"/>
</dbReference>
<dbReference type="InterPro" id="IPR006638">
    <property type="entry name" value="Elp3/MiaA/NifB-like_rSAM"/>
</dbReference>
<dbReference type="InterPro" id="IPR031691">
    <property type="entry name" value="LIAS_N"/>
</dbReference>
<dbReference type="InterPro" id="IPR003698">
    <property type="entry name" value="Lipoyl_synth"/>
</dbReference>
<dbReference type="InterPro" id="IPR007197">
    <property type="entry name" value="rSAM"/>
</dbReference>
<dbReference type="NCBIfam" id="TIGR00510">
    <property type="entry name" value="lipA"/>
    <property type="match status" value="1"/>
</dbReference>
<dbReference type="NCBIfam" id="NF004019">
    <property type="entry name" value="PRK05481.1"/>
    <property type="match status" value="1"/>
</dbReference>
<dbReference type="NCBIfam" id="NF009544">
    <property type="entry name" value="PRK12928.1"/>
    <property type="match status" value="1"/>
</dbReference>
<dbReference type="PANTHER" id="PTHR10949">
    <property type="entry name" value="LIPOYL SYNTHASE"/>
    <property type="match status" value="1"/>
</dbReference>
<dbReference type="PANTHER" id="PTHR10949:SF0">
    <property type="entry name" value="LIPOYL SYNTHASE, MITOCHONDRIAL"/>
    <property type="match status" value="1"/>
</dbReference>
<dbReference type="Pfam" id="PF16881">
    <property type="entry name" value="LIAS_N"/>
    <property type="match status" value="1"/>
</dbReference>
<dbReference type="Pfam" id="PF04055">
    <property type="entry name" value="Radical_SAM"/>
    <property type="match status" value="1"/>
</dbReference>
<dbReference type="PIRSF" id="PIRSF005963">
    <property type="entry name" value="Lipoyl_synth"/>
    <property type="match status" value="1"/>
</dbReference>
<dbReference type="SFLD" id="SFLDF00271">
    <property type="entry name" value="lipoyl_synthase"/>
    <property type="match status" value="1"/>
</dbReference>
<dbReference type="SFLD" id="SFLDS00029">
    <property type="entry name" value="Radical_SAM"/>
    <property type="match status" value="1"/>
</dbReference>
<dbReference type="SMART" id="SM00729">
    <property type="entry name" value="Elp3"/>
    <property type="match status" value="1"/>
</dbReference>
<dbReference type="SUPFAM" id="SSF102114">
    <property type="entry name" value="Radical SAM enzymes"/>
    <property type="match status" value="1"/>
</dbReference>
<dbReference type="PROSITE" id="PS51918">
    <property type="entry name" value="RADICAL_SAM"/>
    <property type="match status" value="1"/>
</dbReference>
<protein>
    <recommendedName>
        <fullName evidence="1">Lipoyl synthase</fullName>
        <ecNumber evidence="1">2.8.1.8</ecNumber>
    </recommendedName>
    <alternativeName>
        <fullName evidence="1">Lip-syn</fullName>
        <shortName evidence="1">LS</shortName>
    </alternativeName>
    <alternativeName>
        <fullName evidence="1">Lipoate synthase</fullName>
    </alternativeName>
    <alternativeName>
        <fullName evidence="1">Lipoic acid synthase</fullName>
    </alternativeName>
    <alternativeName>
        <fullName evidence="1">Sulfur insertion protein LipA</fullName>
    </alternativeName>
</protein>
<proteinExistence type="inferred from homology"/>
<reference key="1">
    <citation type="journal article" date="2009" name="BMC Genomics">
        <title>Pseudogene accumulation in the evolutionary histories of Salmonella enterica serovars Paratyphi A and Typhi.</title>
        <authorList>
            <person name="Holt K.E."/>
            <person name="Thomson N.R."/>
            <person name="Wain J."/>
            <person name="Langridge G.C."/>
            <person name="Hasan R."/>
            <person name="Bhutta Z.A."/>
            <person name="Quail M.A."/>
            <person name="Norbertczak H."/>
            <person name="Walker D."/>
            <person name="Simmonds M."/>
            <person name="White B."/>
            <person name="Bason N."/>
            <person name="Mungall K."/>
            <person name="Dougan G."/>
            <person name="Parkhill J."/>
        </authorList>
    </citation>
    <scope>NUCLEOTIDE SEQUENCE [LARGE SCALE GENOMIC DNA]</scope>
    <source>
        <strain>AKU_12601</strain>
    </source>
</reference>
<comment type="function">
    <text evidence="1">Catalyzes the radical-mediated insertion of two sulfur atoms into the C-6 and C-8 positions of the octanoyl moiety bound to the lipoyl domains of lipoate-dependent enzymes, thereby converting the octanoylated domains into lipoylated derivatives.</text>
</comment>
<comment type="catalytic activity">
    <reaction evidence="1">
        <text>[[Fe-S] cluster scaffold protein carrying a second [4Fe-4S](2+) cluster] + N(6)-octanoyl-L-lysyl-[protein] + 2 oxidized [2Fe-2S]-[ferredoxin] + 2 S-adenosyl-L-methionine + 4 H(+) = [[Fe-S] cluster scaffold protein] + N(6)-[(R)-dihydrolipoyl]-L-lysyl-[protein] + 4 Fe(3+) + 2 hydrogen sulfide + 2 5'-deoxyadenosine + 2 L-methionine + 2 reduced [2Fe-2S]-[ferredoxin]</text>
        <dbReference type="Rhea" id="RHEA:16585"/>
        <dbReference type="Rhea" id="RHEA-COMP:9928"/>
        <dbReference type="Rhea" id="RHEA-COMP:10000"/>
        <dbReference type="Rhea" id="RHEA-COMP:10001"/>
        <dbReference type="Rhea" id="RHEA-COMP:10475"/>
        <dbReference type="Rhea" id="RHEA-COMP:14568"/>
        <dbReference type="Rhea" id="RHEA-COMP:14569"/>
        <dbReference type="ChEBI" id="CHEBI:15378"/>
        <dbReference type="ChEBI" id="CHEBI:17319"/>
        <dbReference type="ChEBI" id="CHEBI:29034"/>
        <dbReference type="ChEBI" id="CHEBI:29919"/>
        <dbReference type="ChEBI" id="CHEBI:33722"/>
        <dbReference type="ChEBI" id="CHEBI:33737"/>
        <dbReference type="ChEBI" id="CHEBI:33738"/>
        <dbReference type="ChEBI" id="CHEBI:57844"/>
        <dbReference type="ChEBI" id="CHEBI:59789"/>
        <dbReference type="ChEBI" id="CHEBI:78809"/>
        <dbReference type="ChEBI" id="CHEBI:83100"/>
        <dbReference type="EC" id="2.8.1.8"/>
    </reaction>
</comment>
<comment type="cofactor">
    <cofactor evidence="1">
        <name>[4Fe-4S] cluster</name>
        <dbReference type="ChEBI" id="CHEBI:49883"/>
    </cofactor>
    <text evidence="1">Binds 2 [4Fe-4S] clusters per subunit. One cluster is coordinated with 3 cysteines and an exchangeable S-adenosyl-L-methionine.</text>
</comment>
<comment type="pathway">
    <text evidence="1">Protein modification; protein lipoylation via endogenous pathway; protein N(6)-(lipoyl)lysine from octanoyl-[acyl-carrier-protein]: step 2/2.</text>
</comment>
<comment type="subcellular location">
    <subcellularLocation>
        <location evidence="1">Cytoplasm</location>
    </subcellularLocation>
</comment>
<comment type="similarity">
    <text evidence="1">Belongs to the radical SAM superfamily. Lipoyl synthase family.</text>
</comment>
<keyword id="KW-0004">4Fe-4S</keyword>
<keyword id="KW-0963">Cytoplasm</keyword>
<keyword id="KW-0408">Iron</keyword>
<keyword id="KW-0411">Iron-sulfur</keyword>
<keyword id="KW-0479">Metal-binding</keyword>
<keyword id="KW-0949">S-adenosyl-L-methionine</keyword>
<keyword id="KW-0808">Transferase</keyword>
<sequence>MSKPIVMERGVKYRDADKMALIPVKNVVTERDALLRKPEWMKIKLPADSTRIQGIKAAMRKNGLHSVCEEASCPNLAECFNHGTATFMILGAICTRRCPFCDVAHGRPVAPDAEEPQKLAQTIADMALRYVVITSVDRDDLRDGGAQHFADCITAIRAKSPEIKIETLVPDFRGRMDRALDILNATPPDVFNHNLENVPRIYRQVRPGADYNWSLKLLERFKEAHPEIPTKSGLMVGLGETNAEIIEVMRDLRRHGVTMLTLGQYLQPSRHHLPVQRYVSPEEFDEMKAEALAMGFTHAACGPFVRSSYHADLQAKGMEVK</sequence>